<gene>
    <name type="ordered locus">YPK_1553</name>
</gene>
<name>Y1553_YERPY</name>
<proteinExistence type="inferred from homology"/>
<protein>
    <recommendedName>
        <fullName evidence="1">UPF0304 protein YPK_1553</fullName>
    </recommendedName>
</protein>
<sequence length="164" mass="19492">MDMTNAQRLILSNQYKMMTMLDPENAERYRRQQTIVERGFGLQMRELDRDFGEMSEDTCRTIINIMEMHHALQVSWGNLKEKQDLDERRISFLGFDAATESRYLSYVRFMVNTEGRYTHFDSGTHGFNSQTPMWDKYQRMLAIWQSCPRQYHLSAVEISQIINA</sequence>
<accession>B1JGK6</accession>
<comment type="similarity">
    <text evidence="1">Belongs to the UPF0304 family.</text>
</comment>
<evidence type="ECO:0000255" key="1">
    <source>
        <dbReference type="HAMAP-Rule" id="MF_00762"/>
    </source>
</evidence>
<organism>
    <name type="scientific">Yersinia pseudotuberculosis serotype O:3 (strain YPIII)</name>
    <dbReference type="NCBI Taxonomy" id="502800"/>
    <lineage>
        <taxon>Bacteria</taxon>
        <taxon>Pseudomonadati</taxon>
        <taxon>Pseudomonadota</taxon>
        <taxon>Gammaproteobacteria</taxon>
        <taxon>Enterobacterales</taxon>
        <taxon>Yersiniaceae</taxon>
        <taxon>Yersinia</taxon>
    </lineage>
</organism>
<reference key="1">
    <citation type="submission" date="2008-02" db="EMBL/GenBank/DDBJ databases">
        <title>Complete sequence of Yersinia pseudotuberculosis YPIII.</title>
        <authorList>
            <consortium name="US DOE Joint Genome Institute"/>
            <person name="Copeland A."/>
            <person name="Lucas S."/>
            <person name="Lapidus A."/>
            <person name="Glavina del Rio T."/>
            <person name="Dalin E."/>
            <person name="Tice H."/>
            <person name="Bruce D."/>
            <person name="Goodwin L."/>
            <person name="Pitluck S."/>
            <person name="Munk A.C."/>
            <person name="Brettin T."/>
            <person name="Detter J.C."/>
            <person name="Han C."/>
            <person name="Tapia R."/>
            <person name="Schmutz J."/>
            <person name="Larimer F."/>
            <person name="Land M."/>
            <person name="Hauser L."/>
            <person name="Challacombe J.F."/>
            <person name="Green L."/>
            <person name="Lindler L.E."/>
            <person name="Nikolich M.P."/>
            <person name="Richardson P."/>
        </authorList>
    </citation>
    <scope>NUCLEOTIDE SEQUENCE [LARGE SCALE GENOMIC DNA]</scope>
    <source>
        <strain>YPIII</strain>
    </source>
</reference>
<dbReference type="EMBL" id="CP000950">
    <property type="protein sequence ID" value="ACA67846.1"/>
    <property type="molecule type" value="Genomic_DNA"/>
</dbReference>
<dbReference type="RefSeq" id="WP_002210286.1">
    <property type="nucleotide sequence ID" value="NZ_CP009792.1"/>
</dbReference>
<dbReference type="SMR" id="B1JGK6"/>
<dbReference type="KEGG" id="ypy:YPK_1553"/>
<dbReference type="PATRIC" id="fig|502800.11.peg.2195"/>
<dbReference type="Gene3D" id="1.10.287.680">
    <property type="entry name" value="Helix hairpin bin"/>
    <property type="match status" value="1"/>
</dbReference>
<dbReference type="Gene3D" id="1.10.3190.10">
    <property type="entry name" value="yfbu gene product, domain 2"/>
    <property type="match status" value="1"/>
</dbReference>
<dbReference type="HAMAP" id="MF_00762">
    <property type="entry name" value="UPF0304"/>
    <property type="match status" value="1"/>
</dbReference>
<dbReference type="InterPro" id="IPR005587">
    <property type="entry name" value="UPF0304_YfbU"/>
</dbReference>
<dbReference type="InterPro" id="IPR023146">
    <property type="entry name" value="YfbU_alpha-helical_sf"/>
</dbReference>
<dbReference type="InterPro" id="IPR023145">
    <property type="entry name" value="YfbU_helix-hairpin_sf"/>
</dbReference>
<dbReference type="NCBIfam" id="NF003936">
    <property type="entry name" value="PRK05445.1"/>
    <property type="match status" value="1"/>
</dbReference>
<dbReference type="Pfam" id="PF03887">
    <property type="entry name" value="YfbU"/>
    <property type="match status" value="1"/>
</dbReference>
<dbReference type="PIRSF" id="PIRSF006272">
    <property type="entry name" value="UCP006272"/>
    <property type="match status" value="1"/>
</dbReference>
<dbReference type="SUPFAM" id="SSF116960">
    <property type="entry name" value="YfbU-like"/>
    <property type="match status" value="1"/>
</dbReference>
<feature type="chain" id="PRO_1000198350" description="UPF0304 protein YPK_1553">
    <location>
        <begin position="1"/>
        <end position="164"/>
    </location>
</feature>